<protein>
    <recommendedName>
        <fullName evidence="1">UPF0398 protein BCQ_1627</fullName>
    </recommendedName>
</protein>
<name>Y1627_BACCQ</name>
<accession>B9IVT0</accession>
<evidence type="ECO:0000255" key="1">
    <source>
        <dbReference type="HAMAP-Rule" id="MF_01575"/>
    </source>
</evidence>
<proteinExistence type="inferred from homology"/>
<organism>
    <name type="scientific">Bacillus cereus (strain Q1)</name>
    <dbReference type="NCBI Taxonomy" id="361100"/>
    <lineage>
        <taxon>Bacteria</taxon>
        <taxon>Bacillati</taxon>
        <taxon>Bacillota</taxon>
        <taxon>Bacilli</taxon>
        <taxon>Bacillales</taxon>
        <taxon>Bacillaceae</taxon>
        <taxon>Bacillus</taxon>
        <taxon>Bacillus cereus group</taxon>
    </lineage>
</organism>
<feature type="chain" id="PRO_1000185581" description="UPF0398 protein BCQ_1627">
    <location>
        <begin position="1"/>
        <end position="184"/>
    </location>
</feature>
<gene>
    <name type="ordered locus">BCQ_1627</name>
</gene>
<dbReference type="EMBL" id="CP000227">
    <property type="protein sequence ID" value="ACM12055.1"/>
    <property type="molecule type" value="Genomic_DNA"/>
</dbReference>
<dbReference type="SMR" id="B9IVT0"/>
<dbReference type="KEGG" id="bcq:BCQ_1627"/>
<dbReference type="HOGENOM" id="CLU_105319_0_0_9"/>
<dbReference type="Proteomes" id="UP000000441">
    <property type="component" value="Chromosome"/>
</dbReference>
<dbReference type="Gene3D" id="3.40.50.450">
    <property type="match status" value="1"/>
</dbReference>
<dbReference type="HAMAP" id="MF_01575">
    <property type="entry name" value="UPF0398"/>
    <property type="match status" value="1"/>
</dbReference>
<dbReference type="InterPro" id="IPR010697">
    <property type="entry name" value="YspA"/>
</dbReference>
<dbReference type="NCBIfam" id="NF010181">
    <property type="entry name" value="PRK13660.1"/>
    <property type="match status" value="1"/>
</dbReference>
<dbReference type="PANTHER" id="PTHR38440:SF1">
    <property type="entry name" value="UPF0398 PROTEIN SPR0331"/>
    <property type="match status" value="1"/>
</dbReference>
<dbReference type="PANTHER" id="PTHR38440">
    <property type="entry name" value="UPF0398 PROTEIN YPSA"/>
    <property type="match status" value="1"/>
</dbReference>
<dbReference type="Pfam" id="PF06908">
    <property type="entry name" value="YpsA"/>
    <property type="match status" value="1"/>
</dbReference>
<dbReference type="PIRSF" id="PIRSF021290">
    <property type="entry name" value="DUF1273"/>
    <property type="match status" value="1"/>
</dbReference>
<dbReference type="SUPFAM" id="SSF102405">
    <property type="entry name" value="MCP/YpsA-like"/>
    <property type="match status" value="1"/>
</dbReference>
<comment type="similarity">
    <text evidence="1">Belongs to the UPF0398 family.</text>
</comment>
<sequence length="184" mass="21510">MKVIAVTGYKPFELGIFKNDHPGVECIKKALRRKLTAFVEDGLEWVIISGQLGVELWAAEVVFEIQVEYPDLKLAVFTPFLEQEEGWKEDNREYYEFILSQADHVDSITKRKYESPEQFKLKNQFFIEKSDALLAVYDEEKPGSPKYIVEAAKKKGEIENYHSYFILFSDLQDIIEEEQWNNAE</sequence>
<reference key="1">
    <citation type="journal article" date="2009" name="J. Bacteriol.">
        <title>Complete genome sequence of the extremophilic Bacillus cereus strain Q1 with industrial applications.</title>
        <authorList>
            <person name="Xiong Z."/>
            <person name="Jiang Y."/>
            <person name="Qi D."/>
            <person name="Lu H."/>
            <person name="Yang F."/>
            <person name="Yang J."/>
            <person name="Chen L."/>
            <person name="Sun L."/>
            <person name="Xu X."/>
            <person name="Xue Y."/>
            <person name="Zhu Y."/>
            <person name="Jin Q."/>
        </authorList>
    </citation>
    <scope>NUCLEOTIDE SEQUENCE [LARGE SCALE GENOMIC DNA]</scope>
    <source>
        <strain>Q1</strain>
    </source>
</reference>